<organism evidence="7">
    <name type="scientific">Arabidopsis thaliana</name>
    <name type="common">Mouse-ear cress</name>
    <dbReference type="NCBI Taxonomy" id="3702"/>
    <lineage>
        <taxon>Eukaryota</taxon>
        <taxon>Viridiplantae</taxon>
        <taxon>Streptophyta</taxon>
        <taxon>Embryophyta</taxon>
        <taxon>Tracheophyta</taxon>
        <taxon>Spermatophyta</taxon>
        <taxon>Magnoliopsida</taxon>
        <taxon>eudicotyledons</taxon>
        <taxon>Gunneridae</taxon>
        <taxon>Pentapetalae</taxon>
        <taxon>rosids</taxon>
        <taxon>malvids</taxon>
        <taxon>Brassicales</taxon>
        <taxon>Brassicaceae</taxon>
        <taxon>Camelineae</taxon>
        <taxon>Arabidopsis</taxon>
    </lineage>
</organism>
<evidence type="ECO:0000250" key="1">
    <source>
        <dbReference type="UniProtKB" id="O43809"/>
    </source>
</evidence>
<evidence type="ECO:0000255" key="2">
    <source>
        <dbReference type="PROSITE-ProRule" id="PRU00794"/>
    </source>
</evidence>
<evidence type="ECO:0000269" key="3">
    <source>
    </source>
</evidence>
<evidence type="ECO:0000303" key="4">
    <source>
    </source>
</evidence>
<evidence type="ECO:0000305" key="5"/>
<evidence type="ECO:0000312" key="6">
    <source>
        <dbReference type="Araport" id="AT4G25550"/>
    </source>
</evidence>
<evidence type="ECO:0000312" key="7">
    <source>
        <dbReference type="EMBL" id="BAC42701.1"/>
    </source>
</evidence>
<dbReference type="EMBL" id="AL022197">
    <property type="protein sequence ID" value="CAA18171.1"/>
    <property type="status" value="ALT_SEQ"/>
    <property type="molecule type" value="Genomic_DNA"/>
</dbReference>
<dbReference type="EMBL" id="AL161563">
    <property type="protein sequence ID" value="CAB81365.1"/>
    <property type="status" value="ALT_SEQ"/>
    <property type="molecule type" value="Genomic_DNA"/>
</dbReference>
<dbReference type="EMBL" id="CP002687">
    <property type="protein sequence ID" value="AEE85076.1"/>
    <property type="molecule type" value="Genomic_DNA"/>
</dbReference>
<dbReference type="EMBL" id="AK118070">
    <property type="protein sequence ID" value="BAC42701.1"/>
    <property type="molecule type" value="mRNA"/>
</dbReference>
<dbReference type="EMBL" id="BT005519">
    <property type="protein sequence ID" value="AAO63939.1"/>
    <property type="molecule type" value="mRNA"/>
</dbReference>
<dbReference type="EMBL" id="AK220576">
    <property type="protein sequence ID" value="BAD94845.1"/>
    <property type="molecule type" value="mRNA"/>
</dbReference>
<dbReference type="EMBL" id="AK228476">
    <property type="protein sequence ID" value="BAF00402.1"/>
    <property type="molecule type" value="mRNA"/>
</dbReference>
<dbReference type="PIR" id="C85295">
    <property type="entry name" value="C85295"/>
</dbReference>
<dbReference type="PIR" id="T05792">
    <property type="entry name" value="T05792"/>
</dbReference>
<dbReference type="RefSeq" id="NP_194285.2">
    <molecule id="Q8GXS3-1"/>
    <property type="nucleotide sequence ID" value="NM_118687.3"/>
</dbReference>
<dbReference type="SMR" id="Q8GXS3"/>
<dbReference type="BioGRID" id="13947">
    <property type="interactions" value="11"/>
</dbReference>
<dbReference type="FunCoup" id="Q8GXS3">
    <property type="interactions" value="4636"/>
</dbReference>
<dbReference type="IntAct" id="Q8GXS3">
    <property type="interactions" value="11"/>
</dbReference>
<dbReference type="STRING" id="3702.Q8GXS3"/>
<dbReference type="PaxDb" id="3702-AT4G25550.1"/>
<dbReference type="ProteomicsDB" id="220611">
    <molecule id="Q8GXS3-1"/>
</dbReference>
<dbReference type="EnsemblPlants" id="AT4G25550.1">
    <molecule id="Q8GXS3-1"/>
    <property type="protein sequence ID" value="AT4G25550.1"/>
    <property type="gene ID" value="AT4G25550"/>
</dbReference>
<dbReference type="GeneID" id="828660"/>
<dbReference type="Gramene" id="AT4G25550.1">
    <molecule id="Q8GXS3-1"/>
    <property type="protein sequence ID" value="AT4G25550.1"/>
    <property type="gene ID" value="AT4G25550"/>
</dbReference>
<dbReference type="KEGG" id="ath:AT4G25550"/>
<dbReference type="Araport" id="AT4G25550"/>
<dbReference type="TAIR" id="AT4G25550">
    <property type="gene designation" value="IRP9"/>
</dbReference>
<dbReference type="eggNOG" id="KOG1689">
    <property type="taxonomic scope" value="Eukaryota"/>
</dbReference>
<dbReference type="HOGENOM" id="CLU_068704_1_1_1"/>
<dbReference type="InParanoid" id="Q8GXS3"/>
<dbReference type="OMA" id="NDEWEIG"/>
<dbReference type="OrthoDB" id="277288at2759"/>
<dbReference type="PhylomeDB" id="Q8GXS3"/>
<dbReference type="PRO" id="PR:Q8GXS3"/>
<dbReference type="Proteomes" id="UP000006548">
    <property type="component" value="Chromosome 4"/>
</dbReference>
<dbReference type="ExpressionAtlas" id="Q8GXS3">
    <property type="expression patterns" value="baseline and differential"/>
</dbReference>
<dbReference type="GO" id="GO:0005829">
    <property type="term" value="C:cytosol"/>
    <property type="evidence" value="ECO:0000314"/>
    <property type="project" value="TAIR"/>
</dbReference>
<dbReference type="GO" id="GO:0005849">
    <property type="term" value="C:mRNA cleavage factor complex"/>
    <property type="evidence" value="ECO:0007669"/>
    <property type="project" value="InterPro"/>
</dbReference>
<dbReference type="GO" id="GO:0046872">
    <property type="term" value="F:metal ion binding"/>
    <property type="evidence" value="ECO:0007669"/>
    <property type="project" value="UniProtKB-KW"/>
</dbReference>
<dbReference type="GO" id="GO:0003729">
    <property type="term" value="F:mRNA binding"/>
    <property type="evidence" value="ECO:0007669"/>
    <property type="project" value="InterPro"/>
</dbReference>
<dbReference type="GO" id="GO:0031124">
    <property type="term" value="P:mRNA 3'-end processing"/>
    <property type="evidence" value="ECO:0007669"/>
    <property type="project" value="InterPro"/>
</dbReference>
<dbReference type="GO" id="GO:0006364">
    <property type="term" value="P:rRNA processing"/>
    <property type="evidence" value="ECO:0000315"/>
    <property type="project" value="TAIR"/>
</dbReference>
<dbReference type="CDD" id="cd18871">
    <property type="entry name" value="NUDIX_Cfim25_Nudt21"/>
    <property type="match status" value="1"/>
</dbReference>
<dbReference type="FunFam" id="3.90.79.10:FF:000020">
    <property type="entry name" value="Pre-mRNA cleavage factor Im subunit 2"/>
    <property type="match status" value="1"/>
</dbReference>
<dbReference type="Gene3D" id="3.90.79.10">
    <property type="entry name" value="Nucleoside Triphosphate Pyrophosphohydrolase"/>
    <property type="match status" value="1"/>
</dbReference>
<dbReference type="InterPro" id="IPR016706">
    <property type="entry name" value="Cleav_polyA_spec_factor_su5"/>
</dbReference>
<dbReference type="InterPro" id="IPR015797">
    <property type="entry name" value="NUDIX_hydrolase-like_dom_sf"/>
</dbReference>
<dbReference type="PANTHER" id="PTHR13047">
    <property type="entry name" value="PRE-MRNA CLEAVAGE FACTOR IM, 25KD SUBUNIT"/>
    <property type="match status" value="1"/>
</dbReference>
<dbReference type="Pfam" id="PF13869">
    <property type="entry name" value="NUDIX_2"/>
    <property type="match status" value="1"/>
</dbReference>
<dbReference type="PIRSF" id="PIRSF017888">
    <property type="entry name" value="CPSF-25"/>
    <property type="match status" value="1"/>
</dbReference>
<dbReference type="SUPFAM" id="SSF55811">
    <property type="entry name" value="Nudix"/>
    <property type="match status" value="1"/>
</dbReference>
<keyword id="KW-0025">Alternative splicing</keyword>
<keyword id="KW-0479">Metal-binding</keyword>
<keyword id="KW-0507">mRNA processing</keyword>
<keyword id="KW-0539">Nucleus</keyword>
<keyword id="KW-1185">Reference proteome</keyword>
<keyword id="KW-0694">RNA-binding</keyword>
<reference key="1">
    <citation type="journal article" date="1999" name="Nature">
        <title>Sequence and analysis of chromosome 4 of the plant Arabidopsis thaliana.</title>
        <authorList>
            <person name="Mayer K.F.X."/>
            <person name="Schueller C."/>
            <person name="Wambutt R."/>
            <person name="Murphy G."/>
            <person name="Volckaert G."/>
            <person name="Pohl T."/>
            <person name="Duesterhoeft A."/>
            <person name="Stiekema W."/>
            <person name="Entian K.-D."/>
            <person name="Terryn N."/>
            <person name="Harris B."/>
            <person name="Ansorge W."/>
            <person name="Brandt P."/>
            <person name="Grivell L.A."/>
            <person name="Rieger M."/>
            <person name="Weichselgartner M."/>
            <person name="de Simone V."/>
            <person name="Obermaier B."/>
            <person name="Mache R."/>
            <person name="Mueller M."/>
            <person name="Kreis M."/>
            <person name="Delseny M."/>
            <person name="Puigdomenech P."/>
            <person name="Watson M."/>
            <person name="Schmidtheini T."/>
            <person name="Reichert B."/>
            <person name="Portetelle D."/>
            <person name="Perez-Alonso M."/>
            <person name="Boutry M."/>
            <person name="Bancroft I."/>
            <person name="Vos P."/>
            <person name="Hoheisel J."/>
            <person name="Zimmermann W."/>
            <person name="Wedler H."/>
            <person name="Ridley P."/>
            <person name="Langham S.-A."/>
            <person name="McCullagh B."/>
            <person name="Bilham L."/>
            <person name="Robben J."/>
            <person name="van der Schueren J."/>
            <person name="Grymonprez B."/>
            <person name="Chuang Y.-J."/>
            <person name="Vandenbussche F."/>
            <person name="Braeken M."/>
            <person name="Weltjens I."/>
            <person name="Voet M."/>
            <person name="Bastiaens I."/>
            <person name="Aert R."/>
            <person name="Defoor E."/>
            <person name="Weitzenegger T."/>
            <person name="Bothe G."/>
            <person name="Ramsperger U."/>
            <person name="Hilbert H."/>
            <person name="Braun M."/>
            <person name="Holzer E."/>
            <person name="Brandt A."/>
            <person name="Peters S."/>
            <person name="van Staveren M."/>
            <person name="Dirkse W."/>
            <person name="Mooijman P."/>
            <person name="Klein Lankhorst R."/>
            <person name="Rose M."/>
            <person name="Hauf J."/>
            <person name="Koetter P."/>
            <person name="Berneiser S."/>
            <person name="Hempel S."/>
            <person name="Feldpausch M."/>
            <person name="Lamberth S."/>
            <person name="Van den Daele H."/>
            <person name="De Keyser A."/>
            <person name="Buysshaert C."/>
            <person name="Gielen J."/>
            <person name="Villarroel R."/>
            <person name="De Clercq R."/>
            <person name="van Montagu M."/>
            <person name="Rogers J."/>
            <person name="Cronin A."/>
            <person name="Quail M.A."/>
            <person name="Bray-Allen S."/>
            <person name="Clark L."/>
            <person name="Doggett J."/>
            <person name="Hall S."/>
            <person name="Kay M."/>
            <person name="Lennard N."/>
            <person name="McLay K."/>
            <person name="Mayes R."/>
            <person name="Pettett A."/>
            <person name="Rajandream M.A."/>
            <person name="Lyne M."/>
            <person name="Benes V."/>
            <person name="Rechmann S."/>
            <person name="Borkova D."/>
            <person name="Bloecker H."/>
            <person name="Scharfe M."/>
            <person name="Grimm M."/>
            <person name="Loehnert T.-H."/>
            <person name="Dose S."/>
            <person name="de Haan M."/>
            <person name="Maarse A.C."/>
            <person name="Schaefer M."/>
            <person name="Mueller-Auer S."/>
            <person name="Gabel C."/>
            <person name="Fuchs M."/>
            <person name="Fartmann B."/>
            <person name="Granderath K."/>
            <person name="Dauner D."/>
            <person name="Herzl A."/>
            <person name="Neumann S."/>
            <person name="Argiriou A."/>
            <person name="Vitale D."/>
            <person name="Liguori R."/>
            <person name="Piravandi E."/>
            <person name="Massenet O."/>
            <person name="Quigley F."/>
            <person name="Clabauld G."/>
            <person name="Muendlein A."/>
            <person name="Felber R."/>
            <person name="Schnabl S."/>
            <person name="Hiller R."/>
            <person name="Schmidt W."/>
            <person name="Lecharny A."/>
            <person name="Aubourg S."/>
            <person name="Chefdor F."/>
            <person name="Cooke R."/>
            <person name="Berger C."/>
            <person name="Monfort A."/>
            <person name="Casacuberta E."/>
            <person name="Gibbons T."/>
            <person name="Weber N."/>
            <person name="Vandenbol M."/>
            <person name="Bargues M."/>
            <person name="Terol J."/>
            <person name="Torres A."/>
            <person name="Perez-Perez A."/>
            <person name="Purnelle B."/>
            <person name="Bent E."/>
            <person name="Johnson S."/>
            <person name="Tacon D."/>
            <person name="Jesse T."/>
            <person name="Heijnen L."/>
            <person name="Schwarz S."/>
            <person name="Scholler P."/>
            <person name="Heber S."/>
            <person name="Francs P."/>
            <person name="Bielke C."/>
            <person name="Frishman D."/>
            <person name="Haase D."/>
            <person name="Lemcke K."/>
            <person name="Mewes H.-W."/>
            <person name="Stocker S."/>
            <person name="Zaccaria P."/>
            <person name="Bevan M."/>
            <person name="Wilson R.K."/>
            <person name="de la Bastide M."/>
            <person name="Habermann K."/>
            <person name="Parnell L."/>
            <person name="Dedhia N."/>
            <person name="Gnoj L."/>
            <person name="Schutz K."/>
            <person name="Huang E."/>
            <person name="Spiegel L."/>
            <person name="Sekhon M."/>
            <person name="Murray J."/>
            <person name="Sheet P."/>
            <person name="Cordes M."/>
            <person name="Abu-Threideh J."/>
            <person name="Stoneking T."/>
            <person name="Kalicki J."/>
            <person name="Graves T."/>
            <person name="Harmon G."/>
            <person name="Edwards J."/>
            <person name="Latreille P."/>
            <person name="Courtney L."/>
            <person name="Cloud J."/>
            <person name="Abbott A."/>
            <person name="Scott K."/>
            <person name="Johnson D."/>
            <person name="Minx P."/>
            <person name="Bentley D."/>
            <person name="Fulton B."/>
            <person name="Miller N."/>
            <person name="Greco T."/>
            <person name="Kemp K."/>
            <person name="Kramer J."/>
            <person name="Fulton L."/>
            <person name="Mardis E."/>
            <person name="Dante M."/>
            <person name="Pepin K."/>
            <person name="Hillier L.W."/>
            <person name="Nelson J."/>
            <person name="Spieth J."/>
            <person name="Ryan E."/>
            <person name="Andrews S."/>
            <person name="Geisel C."/>
            <person name="Layman D."/>
            <person name="Du H."/>
            <person name="Ali J."/>
            <person name="Berghoff A."/>
            <person name="Jones K."/>
            <person name="Drone K."/>
            <person name="Cotton M."/>
            <person name="Joshu C."/>
            <person name="Antonoiu B."/>
            <person name="Zidanic M."/>
            <person name="Strong C."/>
            <person name="Sun H."/>
            <person name="Lamar B."/>
            <person name="Yordan C."/>
            <person name="Ma P."/>
            <person name="Zhong J."/>
            <person name="Preston R."/>
            <person name="Vil D."/>
            <person name="Shekher M."/>
            <person name="Matero A."/>
            <person name="Shah R."/>
            <person name="Swaby I.K."/>
            <person name="O'Shaughnessy A."/>
            <person name="Rodriguez M."/>
            <person name="Hoffman J."/>
            <person name="Till S."/>
            <person name="Granat S."/>
            <person name="Shohdy N."/>
            <person name="Hasegawa A."/>
            <person name="Hameed A."/>
            <person name="Lodhi M."/>
            <person name="Johnson A."/>
            <person name="Chen E."/>
            <person name="Marra M.A."/>
            <person name="Martienssen R."/>
            <person name="McCombie W.R."/>
        </authorList>
    </citation>
    <scope>NUCLEOTIDE SEQUENCE [LARGE SCALE GENOMIC DNA]</scope>
    <source>
        <strain>cv. Columbia</strain>
    </source>
</reference>
<reference key="2">
    <citation type="journal article" date="2017" name="Plant J.">
        <title>Araport11: a complete reannotation of the Arabidopsis thaliana reference genome.</title>
        <authorList>
            <person name="Cheng C.Y."/>
            <person name="Krishnakumar V."/>
            <person name="Chan A.P."/>
            <person name="Thibaud-Nissen F."/>
            <person name="Schobel S."/>
            <person name="Town C.D."/>
        </authorList>
    </citation>
    <scope>GENOME REANNOTATION</scope>
    <source>
        <strain>cv. Columbia</strain>
    </source>
</reference>
<reference key="3">
    <citation type="journal article" date="2002" name="Science">
        <title>Functional annotation of a full-length Arabidopsis cDNA collection.</title>
        <authorList>
            <person name="Seki M."/>
            <person name="Narusaka M."/>
            <person name="Kamiya A."/>
            <person name="Ishida J."/>
            <person name="Satou M."/>
            <person name="Sakurai T."/>
            <person name="Nakajima M."/>
            <person name="Enju A."/>
            <person name="Akiyama K."/>
            <person name="Oono Y."/>
            <person name="Muramatsu M."/>
            <person name="Hayashizaki Y."/>
            <person name="Kawai J."/>
            <person name="Carninci P."/>
            <person name="Itoh M."/>
            <person name="Ishii Y."/>
            <person name="Arakawa T."/>
            <person name="Shibata K."/>
            <person name="Shinagawa A."/>
            <person name="Shinozaki K."/>
        </authorList>
    </citation>
    <scope>NUCLEOTIDE SEQUENCE [LARGE SCALE MRNA] (ISOFORM 1)</scope>
    <source>
        <strain>cv. Columbia</strain>
    </source>
</reference>
<reference key="4">
    <citation type="journal article" date="2003" name="Science">
        <title>Empirical analysis of transcriptional activity in the Arabidopsis genome.</title>
        <authorList>
            <person name="Yamada K."/>
            <person name="Lim J."/>
            <person name="Dale J.M."/>
            <person name="Chen H."/>
            <person name="Shinn P."/>
            <person name="Palm C.J."/>
            <person name="Southwick A.M."/>
            <person name="Wu H.C."/>
            <person name="Kim C.J."/>
            <person name="Nguyen M."/>
            <person name="Pham P.K."/>
            <person name="Cheuk R.F."/>
            <person name="Karlin-Newmann G."/>
            <person name="Liu S.X."/>
            <person name="Lam B."/>
            <person name="Sakano H."/>
            <person name="Wu T."/>
            <person name="Yu G."/>
            <person name="Miranda M."/>
            <person name="Quach H.L."/>
            <person name="Tripp M."/>
            <person name="Chang C.H."/>
            <person name="Lee J.M."/>
            <person name="Toriumi M.J."/>
            <person name="Chan M.M."/>
            <person name="Tang C.C."/>
            <person name="Onodera C.S."/>
            <person name="Deng J.M."/>
            <person name="Akiyama K."/>
            <person name="Ansari Y."/>
            <person name="Arakawa T."/>
            <person name="Banh J."/>
            <person name="Banno F."/>
            <person name="Bowser L."/>
            <person name="Brooks S.Y."/>
            <person name="Carninci P."/>
            <person name="Chao Q."/>
            <person name="Choy N."/>
            <person name="Enju A."/>
            <person name="Goldsmith A.D."/>
            <person name="Gurjal M."/>
            <person name="Hansen N.F."/>
            <person name="Hayashizaki Y."/>
            <person name="Johnson-Hopson C."/>
            <person name="Hsuan V.W."/>
            <person name="Iida K."/>
            <person name="Karnes M."/>
            <person name="Khan S."/>
            <person name="Koesema E."/>
            <person name="Ishida J."/>
            <person name="Jiang P.X."/>
            <person name="Jones T."/>
            <person name="Kawai J."/>
            <person name="Kamiya A."/>
            <person name="Meyers C."/>
            <person name="Nakajima M."/>
            <person name="Narusaka M."/>
            <person name="Seki M."/>
            <person name="Sakurai T."/>
            <person name="Satou M."/>
            <person name="Tamse R."/>
            <person name="Vaysberg M."/>
            <person name="Wallender E.K."/>
            <person name="Wong C."/>
            <person name="Yamamura Y."/>
            <person name="Yuan S."/>
            <person name="Shinozaki K."/>
            <person name="Davis R.W."/>
            <person name="Theologis A."/>
            <person name="Ecker J.R."/>
        </authorList>
    </citation>
    <scope>NUCLEOTIDE SEQUENCE [LARGE SCALE MRNA] (ISOFORM 1)</scope>
    <source>
        <strain>cv. Columbia</strain>
    </source>
</reference>
<reference key="5">
    <citation type="submission" date="2005-03" db="EMBL/GenBank/DDBJ databases">
        <title>Large-scale analysis of RIKEN Arabidopsis full-length (RAFL) cDNAs.</title>
        <authorList>
            <person name="Totoki Y."/>
            <person name="Seki M."/>
            <person name="Ishida J."/>
            <person name="Nakajima M."/>
            <person name="Enju A."/>
            <person name="Kamiya A."/>
            <person name="Narusaka M."/>
            <person name="Shin-i T."/>
            <person name="Nakagawa M."/>
            <person name="Sakamoto N."/>
            <person name="Oishi K."/>
            <person name="Kohara Y."/>
            <person name="Kobayashi M."/>
            <person name="Toyoda A."/>
            <person name="Sakaki Y."/>
            <person name="Sakurai T."/>
            <person name="Iida K."/>
            <person name="Akiyama K."/>
            <person name="Satou M."/>
            <person name="Toyoda T."/>
            <person name="Konagaya A."/>
            <person name="Carninci P."/>
            <person name="Kawai J."/>
            <person name="Hayashizaki Y."/>
            <person name="Shinozaki K."/>
        </authorList>
    </citation>
    <scope>NUCLEOTIDE SEQUENCE [LARGE SCALE MRNA] (ISOFORMS 1 AND 2)</scope>
    <source>
        <strain>cv. Columbia</strain>
    </source>
</reference>
<reference key="6">
    <citation type="journal article" date="2008" name="BMC Genomics">
        <title>Arabidopsis mRNA polyadenylation machinery: comprehensive analysis of protein-protein interactions and gene expression profiling.</title>
        <authorList>
            <person name="Hunt A.G."/>
            <person name="Xu R."/>
            <person name="Addepalli B."/>
            <person name="Rao S."/>
            <person name="Forbes K.P."/>
            <person name="Meeks L.R."/>
            <person name="Xing D."/>
            <person name="Mo M."/>
            <person name="Zhao H."/>
            <person name="Bandyopadhyay A."/>
            <person name="Dampanaboina L."/>
            <person name="Marion A."/>
            <person name="Von Lanken C."/>
            <person name="Li Q.Q."/>
        </authorList>
    </citation>
    <scope>INTERACTION WITH FIPS5; PAPS4 AND CPSF30</scope>
    <scope>GENE FAMILY</scope>
    <scope>NOMENCLATURE</scope>
</reference>
<proteinExistence type="evidence at protein level"/>
<sequence length="200" mass="22830">MAMSQVVNTYPLSNYSFGTKEPKLEKDTSVADRLARMKINYMKEGMRTSVEGILLVQEHNHPHILLLQIGNTFCKLPGGRLKPGENEADGLKRKLTSKLGGNSAALVPDWTVGECVATWWRPNFETMMYPYCPPHITKPKECKRLYIVHLSEKEYFAVPKNLKLLAVPLFELYDNVQRYGPVISTIPQQLSRFHFNMISS</sequence>
<feature type="chain" id="PRO_0000431332" description="Pre-mRNA cleavage factor Im 25 kDa subunit 2">
    <location>
        <begin position="1"/>
        <end position="200"/>
    </location>
</feature>
<feature type="domain" description="Nudix hydrolase" evidence="2">
    <location>
        <begin position="45"/>
        <end position="172"/>
    </location>
</feature>
<feature type="region of interest" description="Interaction with RNA" evidence="1">
    <location>
        <begin position="72"/>
        <end position="74"/>
    </location>
</feature>
<feature type="short sequence motif" description="Nudix box" evidence="2">
    <location>
        <begin position="79"/>
        <end position="100"/>
    </location>
</feature>
<feature type="site" description="Interaction with RNA" evidence="1">
    <location>
        <position position="33"/>
    </location>
</feature>
<feature type="site" description="Interaction with RNA" evidence="1">
    <location>
        <position position="179"/>
    </location>
</feature>
<feature type="splice variant" id="VSP_057237" description="In isoform 2.">
    <location>
        <begin position="57"/>
        <end position="200"/>
    </location>
</feature>
<comment type="function">
    <text evidence="1">Component of the cleavage factor Im (CFIm) complex that plays a key role in pre-mRNA 3'-processing. Involved in association with CPSF6 or CPSF7 in pre-MRNA 3'-end poly(A) site cleavage and poly(A) addition. NUDT21/CPSF5 binds to cleavage and polyadenylation RNA substrates. The homodimer mediates simultaneous sequence-specific recognition of two 5'-UGUA-3' elements within the pre-mRNA. Binds to, but does not hydrolyze mono- and di-adenosine nucleotides. May have a role in mRNA export.</text>
</comment>
<comment type="subunit">
    <text evidence="1 3">Homodimer. Component of the cleavage factor Im (CFIm) complex (By similarity). Forms a complex with cleavage and polyadenylation specificity factor (CPSF) subunits FIPS5, PAPS4 and CPSF30 (PubMed:18479511).</text>
</comment>
<comment type="subcellular location">
    <subcellularLocation>
        <location evidence="1">Nucleus</location>
    </subcellularLocation>
    <text evidence="1">In punctate subnuclear structures localized adjacent to nuclear speckles, called paraspeckles.</text>
</comment>
<comment type="alternative products">
    <event type="alternative splicing"/>
    <isoform>
        <id>Q8GXS3-1</id>
        <name>1</name>
        <sequence type="displayed"/>
    </isoform>
    <isoform>
        <id>Q8GXS3-2</id>
        <name>2</name>
        <sequence type="described" ref="VSP_057237"/>
    </isoform>
</comment>
<comment type="similarity">
    <text evidence="5">Belongs to the Nudix hydrolase family. CPSF5 subfamily.</text>
</comment>
<comment type="sequence caution" evidence="5">
    <conflict type="erroneous gene model prediction">
        <sequence resource="EMBL-CDS" id="CAA18171"/>
    </conflict>
</comment>
<comment type="sequence caution" evidence="5">
    <conflict type="erroneous gene model prediction">
        <sequence resource="EMBL-CDS" id="CAB81365"/>
    </conflict>
</comment>
<protein>
    <recommendedName>
        <fullName evidence="4">Pre-mRNA cleavage factor Im 25 kDa subunit 2</fullName>
    </recommendedName>
</protein>
<accession>Q8GXS3</accession>
<accession>O65606</accession>
<accession>Q570Y1</accession>
<accession>Q9M0K5</accession>
<name>CFIS2_ARATH</name>
<gene>
    <name evidence="4" type="primary">CFIS2</name>
    <name evidence="6" type="ordered locus">At4g25550</name>
    <name evidence="7" type="ORF">M7J2.80</name>
</gene>